<reference key="1">
    <citation type="journal article" date="2008" name="J. Bacteriol.">
        <title>Genome sequence of Staphylococcus aureus strain Newman and comparative analysis of staphylococcal genomes: polymorphism and evolution of two major pathogenicity islands.</title>
        <authorList>
            <person name="Baba T."/>
            <person name="Bae T."/>
            <person name="Schneewind O."/>
            <person name="Takeuchi F."/>
            <person name="Hiramatsu K."/>
        </authorList>
    </citation>
    <scope>NUCLEOTIDE SEQUENCE [LARGE SCALE GENOMIC DNA]</scope>
    <source>
        <strain>Newman</strain>
    </source>
</reference>
<feature type="chain" id="PRO_1000072820" description="Protein SprT-like">
    <location>
        <begin position="1"/>
        <end position="151"/>
    </location>
</feature>
<feature type="domain" description="SprT-like" evidence="1">
    <location>
        <begin position="6"/>
        <end position="147"/>
    </location>
</feature>
<feature type="active site" evidence="1">
    <location>
        <position position="68"/>
    </location>
</feature>
<feature type="binding site" evidence="1">
    <location>
        <position position="67"/>
    </location>
    <ligand>
        <name>Zn(2+)</name>
        <dbReference type="ChEBI" id="CHEBI:29105"/>
    </ligand>
</feature>
<feature type="binding site" evidence="1">
    <location>
        <position position="71"/>
    </location>
    <ligand>
        <name>Zn(2+)</name>
        <dbReference type="ChEBI" id="CHEBI:29105"/>
    </ligand>
</feature>
<protein>
    <recommendedName>
        <fullName evidence="1">Protein SprT-like</fullName>
    </recommendedName>
</protein>
<accession>A6QIQ8</accession>
<proteinExistence type="inferred from homology"/>
<sequence>MNNDKLQRMVENLSEEKFGRTFRHCAYFNKRLRTTGGRYLLKSHDIEINPKQYEHYGEDAVVKIILHELCHYHLHIAGKGYQHKDQDFKRLSQQVGAPRFCNSIESYQQRANYEYYCTKCHAKYIRIRKVDTNRMRCGHCNGKLRMKRQLK</sequence>
<name>SPRTL_STAAE</name>
<keyword id="KW-0963">Cytoplasm</keyword>
<keyword id="KW-0479">Metal-binding</keyword>
<keyword id="KW-0862">Zinc</keyword>
<evidence type="ECO:0000255" key="1">
    <source>
        <dbReference type="HAMAP-Rule" id="MF_00745"/>
    </source>
</evidence>
<organism>
    <name type="scientific">Staphylococcus aureus (strain Newman)</name>
    <dbReference type="NCBI Taxonomy" id="426430"/>
    <lineage>
        <taxon>Bacteria</taxon>
        <taxon>Bacillati</taxon>
        <taxon>Bacillota</taxon>
        <taxon>Bacilli</taxon>
        <taxon>Bacillales</taxon>
        <taxon>Staphylococcaceae</taxon>
        <taxon>Staphylococcus</taxon>
    </lineage>
</organism>
<dbReference type="EMBL" id="AP009351">
    <property type="protein sequence ID" value="BAF68240.1"/>
    <property type="molecule type" value="Genomic_DNA"/>
</dbReference>
<dbReference type="RefSeq" id="WP_001058111.1">
    <property type="nucleotide sequence ID" value="NZ_JBBIAE010000008.1"/>
</dbReference>
<dbReference type="KEGG" id="sae:NWMN_1968"/>
<dbReference type="HOGENOM" id="CLU_123820_0_0_9"/>
<dbReference type="Proteomes" id="UP000006386">
    <property type="component" value="Chromosome"/>
</dbReference>
<dbReference type="GO" id="GO:0005737">
    <property type="term" value="C:cytoplasm"/>
    <property type="evidence" value="ECO:0007669"/>
    <property type="project" value="UniProtKB-SubCell"/>
</dbReference>
<dbReference type="GO" id="GO:0008270">
    <property type="term" value="F:zinc ion binding"/>
    <property type="evidence" value="ECO:0007669"/>
    <property type="project" value="UniProtKB-UniRule"/>
</dbReference>
<dbReference type="GO" id="GO:0006950">
    <property type="term" value="P:response to stress"/>
    <property type="evidence" value="ECO:0007669"/>
    <property type="project" value="UniProtKB-ARBA"/>
</dbReference>
<dbReference type="HAMAP" id="MF_00745">
    <property type="entry name" value="SprT_like"/>
    <property type="match status" value="1"/>
</dbReference>
<dbReference type="InterPro" id="IPR006640">
    <property type="entry name" value="SprT-like_domain"/>
</dbReference>
<dbReference type="InterPro" id="IPR035240">
    <property type="entry name" value="SprT_Zn_ribbon"/>
</dbReference>
<dbReference type="InterPro" id="IPR023524">
    <property type="entry name" value="Uncharacterised_SprT-like"/>
</dbReference>
<dbReference type="NCBIfam" id="NF003339">
    <property type="entry name" value="PRK04351.1"/>
    <property type="match status" value="1"/>
</dbReference>
<dbReference type="Pfam" id="PF10263">
    <property type="entry name" value="SprT-like"/>
    <property type="match status" value="1"/>
</dbReference>
<dbReference type="Pfam" id="PF17283">
    <property type="entry name" value="Zn_ribbon_SprT"/>
    <property type="match status" value="1"/>
</dbReference>
<dbReference type="SMART" id="SM00731">
    <property type="entry name" value="SprT"/>
    <property type="match status" value="1"/>
</dbReference>
<gene>
    <name type="ordered locus">NWMN_1968</name>
</gene>
<comment type="cofactor">
    <cofactor evidence="1">
        <name>Zn(2+)</name>
        <dbReference type="ChEBI" id="CHEBI:29105"/>
    </cofactor>
    <text evidence="1">Binds 1 zinc ion.</text>
</comment>
<comment type="subcellular location">
    <subcellularLocation>
        <location evidence="1">Cytoplasm</location>
    </subcellularLocation>
</comment>
<comment type="similarity">
    <text evidence="1">Belongs to the SprT family.</text>
</comment>